<feature type="chain" id="PRO_1000097644" description="Ribose-5-phosphate isomerase A">
    <location>
        <begin position="1"/>
        <end position="219"/>
    </location>
</feature>
<feature type="active site" description="Proton acceptor" evidence="1">
    <location>
        <position position="103"/>
    </location>
</feature>
<feature type="binding site" evidence="1">
    <location>
        <begin position="28"/>
        <end position="31"/>
    </location>
    <ligand>
        <name>substrate</name>
    </ligand>
</feature>
<feature type="binding site" evidence="1">
    <location>
        <begin position="81"/>
        <end position="84"/>
    </location>
    <ligand>
        <name>substrate</name>
    </ligand>
</feature>
<feature type="binding site" evidence="1">
    <location>
        <begin position="94"/>
        <end position="97"/>
    </location>
    <ligand>
        <name>substrate</name>
    </ligand>
</feature>
<feature type="binding site" evidence="1">
    <location>
        <position position="121"/>
    </location>
    <ligand>
        <name>substrate</name>
    </ligand>
</feature>
<name>RPIA_ACTPJ</name>
<comment type="function">
    <text evidence="1">Catalyzes the reversible conversion of ribose-5-phosphate to ribulose 5-phosphate.</text>
</comment>
<comment type="catalytic activity">
    <reaction evidence="1">
        <text>aldehydo-D-ribose 5-phosphate = D-ribulose 5-phosphate</text>
        <dbReference type="Rhea" id="RHEA:14657"/>
        <dbReference type="ChEBI" id="CHEBI:58121"/>
        <dbReference type="ChEBI" id="CHEBI:58273"/>
        <dbReference type="EC" id="5.3.1.6"/>
    </reaction>
</comment>
<comment type="pathway">
    <text evidence="1">Carbohydrate degradation; pentose phosphate pathway; D-ribose 5-phosphate from D-ribulose 5-phosphate (non-oxidative stage): step 1/1.</text>
</comment>
<comment type="subunit">
    <text evidence="1">Homodimer.</text>
</comment>
<comment type="similarity">
    <text evidence="1">Belongs to the ribose 5-phosphate isomerase family.</text>
</comment>
<gene>
    <name evidence="1" type="primary">rpiA</name>
    <name type="ordered locus">APJL_1475</name>
</gene>
<dbReference type="EC" id="5.3.1.6" evidence="1"/>
<dbReference type="EMBL" id="CP000687">
    <property type="protein sequence ID" value="ABY70027.1"/>
    <property type="molecule type" value="Genomic_DNA"/>
</dbReference>
<dbReference type="RefSeq" id="WP_012263240.1">
    <property type="nucleotide sequence ID" value="NC_010278.1"/>
</dbReference>
<dbReference type="SMR" id="B0BR42"/>
<dbReference type="KEGG" id="apj:APJL_1475"/>
<dbReference type="HOGENOM" id="CLU_056590_1_1_6"/>
<dbReference type="UniPathway" id="UPA00115">
    <property type="reaction ID" value="UER00412"/>
</dbReference>
<dbReference type="Proteomes" id="UP000008547">
    <property type="component" value="Chromosome"/>
</dbReference>
<dbReference type="GO" id="GO:0005829">
    <property type="term" value="C:cytosol"/>
    <property type="evidence" value="ECO:0007669"/>
    <property type="project" value="TreeGrafter"/>
</dbReference>
<dbReference type="GO" id="GO:0004751">
    <property type="term" value="F:ribose-5-phosphate isomerase activity"/>
    <property type="evidence" value="ECO:0007669"/>
    <property type="project" value="UniProtKB-UniRule"/>
</dbReference>
<dbReference type="GO" id="GO:0006014">
    <property type="term" value="P:D-ribose metabolic process"/>
    <property type="evidence" value="ECO:0007669"/>
    <property type="project" value="TreeGrafter"/>
</dbReference>
<dbReference type="GO" id="GO:0009052">
    <property type="term" value="P:pentose-phosphate shunt, non-oxidative branch"/>
    <property type="evidence" value="ECO:0007669"/>
    <property type="project" value="UniProtKB-UniRule"/>
</dbReference>
<dbReference type="CDD" id="cd01398">
    <property type="entry name" value="RPI_A"/>
    <property type="match status" value="1"/>
</dbReference>
<dbReference type="FunFam" id="3.30.70.260:FF:000004">
    <property type="entry name" value="Ribose-5-phosphate isomerase A"/>
    <property type="match status" value="1"/>
</dbReference>
<dbReference type="FunFam" id="3.40.50.1360:FF:000001">
    <property type="entry name" value="Ribose-5-phosphate isomerase A"/>
    <property type="match status" value="1"/>
</dbReference>
<dbReference type="Gene3D" id="3.30.70.260">
    <property type="match status" value="1"/>
</dbReference>
<dbReference type="Gene3D" id="3.40.50.1360">
    <property type="match status" value="1"/>
</dbReference>
<dbReference type="HAMAP" id="MF_00170">
    <property type="entry name" value="Rib_5P_isom_A"/>
    <property type="match status" value="1"/>
</dbReference>
<dbReference type="InterPro" id="IPR037171">
    <property type="entry name" value="NagB/RpiA_transferase-like"/>
</dbReference>
<dbReference type="InterPro" id="IPR020672">
    <property type="entry name" value="Ribose5P_isomerase_typA_subgr"/>
</dbReference>
<dbReference type="InterPro" id="IPR004788">
    <property type="entry name" value="Ribose5P_isomerase_type_A"/>
</dbReference>
<dbReference type="NCBIfam" id="NF001924">
    <property type="entry name" value="PRK00702.1"/>
    <property type="match status" value="1"/>
</dbReference>
<dbReference type="NCBIfam" id="TIGR00021">
    <property type="entry name" value="rpiA"/>
    <property type="match status" value="1"/>
</dbReference>
<dbReference type="PANTHER" id="PTHR11934">
    <property type="entry name" value="RIBOSE-5-PHOSPHATE ISOMERASE"/>
    <property type="match status" value="1"/>
</dbReference>
<dbReference type="PANTHER" id="PTHR11934:SF0">
    <property type="entry name" value="RIBOSE-5-PHOSPHATE ISOMERASE"/>
    <property type="match status" value="1"/>
</dbReference>
<dbReference type="Pfam" id="PF06026">
    <property type="entry name" value="Rib_5-P_isom_A"/>
    <property type="match status" value="1"/>
</dbReference>
<dbReference type="SUPFAM" id="SSF75445">
    <property type="entry name" value="D-ribose-5-phosphate isomerase (RpiA), lid domain"/>
    <property type="match status" value="1"/>
</dbReference>
<dbReference type="SUPFAM" id="SSF100950">
    <property type="entry name" value="NagB/RpiA/CoA transferase-like"/>
    <property type="match status" value="1"/>
</dbReference>
<proteinExistence type="inferred from homology"/>
<organism>
    <name type="scientific">Actinobacillus pleuropneumoniae serotype 3 (strain JL03)</name>
    <dbReference type="NCBI Taxonomy" id="434271"/>
    <lineage>
        <taxon>Bacteria</taxon>
        <taxon>Pseudomonadati</taxon>
        <taxon>Pseudomonadota</taxon>
        <taxon>Gammaproteobacteria</taxon>
        <taxon>Pasteurellales</taxon>
        <taxon>Pasteurellaceae</taxon>
        <taxon>Actinobacillus</taxon>
    </lineage>
</organism>
<keyword id="KW-0413">Isomerase</keyword>
<sequence>MTQQEMKKIAAQAALQFVKPDTIVGVGSGSTVNCFIDALASMKDQIKGAVAASKASEGRLRAIGIEVFNANEVSELDVYIDGADEITPQGAMIKGGGAALTREKIVSSLAKKFVCIVDGSKQVDVLGTTFPLPVEVIPMARSYVARQLVALGGSPEYREGVVTDNGNVILDVHNFHIIEPLKMEHTINNIAGVVTNGIFAQRYANVTIVGTPEGAKIIE</sequence>
<evidence type="ECO:0000255" key="1">
    <source>
        <dbReference type="HAMAP-Rule" id="MF_00170"/>
    </source>
</evidence>
<accession>B0BR42</accession>
<reference key="1">
    <citation type="journal article" date="2008" name="PLoS ONE">
        <title>Genome biology of Actinobacillus pleuropneumoniae JL03, an isolate of serotype 3 prevalent in China.</title>
        <authorList>
            <person name="Xu Z."/>
            <person name="Zhou Y."/>
            <person name="Li L."/>
            <person name="Zhou R."/>
            <person name="Xiao S."/>
            <person name="Wan Y."/>
            <person name="Zhang S."/>
            <person name="Wang K."/>
            <person name="Li W."/>
            <person name="Li L."/>
            <person name="Jin H."/>
            <person name="Kang M."/>
            <person name="Dalai B."/>
            <person name="Li T."/>
            <person name="Liu L."/>
            <person name="Cheng Y."/>
            <person name="Zhang L."/>
            <person name="Xu T."/>
            <person name="Zheng H."/>
            <person name="Pu S."/>
            <person name="Wang B."/>
            <person name="Gu W."/>
            <person name="Zhang X.L."/>
            <person name="Zhu G.-F."/>
            <person name="Wang S."/>
            <person name="Zhao G.-P."/>
            <person name="Chen H."/>
        </authorList>
    </citation>
    <scope>NUCLEOTIDE SEQUENCE [LARGE SCALE GENOMIC DNA]</scope>
    <source>
        <strain>JL03</strain>
    </source>
</reference>
<protein>
    <recommendedName>
        <fullName evidence="1">Ribose-5-phosphate isomerase A</fullName>
        <ecNumber evidence="1">5.3.1.6</ecNumber>
    </recommendedName>
    <alternativeName>
        <fullName evidence="1">Phosphoriboisomerase A</fullName>
        <shortName evidence="1">PRI</shortName>
    </alternativeName>
</protein>